<protein>
    <recommendedName>
        <fullName evidence="1">Large ribosomal subunit protein uL23</fullName>
    </recommendedName>
    <alternativeName>
        <fullName evidence="2">50S ribosomal protein L23</fullName>
    </alternativeName>
</protein>
<dbReference type="EMBL" id="CP000702">
    <property type="protein sequence ID" value="ABQ47308.1"/>
    <property type="molecule type" value="Genomic_DNA"/>
</dbReference>
<dbReference type="RefSeq" id="WP_011943786.1">
    <property type="nucleotide sequence ID" value="NC_009486.1"/>
</dbReference>
<dbReference type="SMR" id="A5IM85"/>
<dbReference type="STRING" id="390874.Tpet_1294"/>
<dbReference type="KEGG" id="tpt:Tpet_1294"/>
<dbReference type="eggNOG" id="COG0089">
    <property type="taxonomic scope" value="Bacteria"/>
</dbReference>
<dbReference type="HOGENOM" id="CLU_037562_3_2_0"/>
<dbReference type="Proteomes" id="UP000006558">
    <property type="component" value="Chromosome"/>
</dbReference>
<dbReference type="GO" id="GO:1990904">
    <property type="term" value="C:ribonucleoprotein complex"/>
    <property type="evidence" value="ECO:0007669"/>
    <property type="project" value="UniProtKB-KW"/>
</dbReference>
<dbReference type="GO" id="GO:0005840">
    <property type="term" value="C:ribosome"/>
    <property type="evidence" value="ECO:0007669"/>
    <property type="project" value="UniProtKB-KW"/>
</dbReference>
<dbReference type="GO" id="GO:0019843">
    <property type="term" value="F:rRNA binding"/>
    <property type="evidence" value="ECO:0007669"/>
    <property type="project" value="UniProtKB-UniRule"/>
</dbReference>
<dbReference type="GO" id="GO:0003735">
    <property type="term" value="F:structural constituent of ribosome"/>
    <property type="evidence" value="ECO:0007669"/>
    <property type="project" value="InterPro"/>
</dbReference>
<dbReference type="GO" id="GO:0006412">
    <property type="term" value="P:translation"/>
    <property type="evidence" value="ECO:0007669"/>
    <property type="project" value="UniProtKB-UniRule"/>
</dbReference>
<dbReference type="FunFam" id="3.30.70.330:FF:000001">
    <property type="entry name" value="50S ribosomal protein L23"/>
    <property type="match status" value="1"/>
</dbReference>
<dbReference type="Gene3D" id="3.30.70.330">
    <property type="match status" value="1"/>
</dbReference>
<dbReference type="HAMAP" id="MF_01369_B">
    <property type="entry name" value="Ribosomal_uL23_B"/>
    <property type="match status" value="1"/>
</dbReference>
<dbReference type="InterPro" id="IPR012677">
    <property type="entry name" value="Nucleotide-bd_a/b_plait_sf"/>
</dbReference>
<dbReference type="InterPro" id="IPR013025">
    <property type="entry name" value="Ribosomal_uL23-like"/>
</dbReference>
<dbReference type="InterPro" id="IPR012678">
    <property type="entry name" value="Ribosomal_uL23/eL15/eS24_sf"/>
</dbReference>
<dbReference type="InterPro" id="IPR001014">
    <property type="entry name" value="Ribosomal_uL23_CS"/>
</dbReference>
<dbReference type="NCBIfam" id="NF004363">
    <property type="entry name" value="PRK05738.2-4"/>
    <property type="match status" value="1"/>
</dbReference>
<dbReference type="NCBIfam" id="NF004366">
    <property type="entry name" value="PRK05738.3-2"/>
    <property type="match status" value="1"/>
</dbReference>
<dbReference type="PANTHER" id="PTHR11620">
    <property type="entry name" value="60S RIBOSOMAL PROTEIN L23A"/>
    <property type="match status" value="1"/>
</dbReference>
<dbReference type="Pfam" id="PF00276">
    <property type="entry name" value="Ribosomal_L23"/>
    <property type="match status" value="1"/>
</dbReference>
<dbReference type="SUPFAM" id="SSF54189">
    <property type="entry name" value="Ribosomal proteins S24e, L23 and L15e"/>
    <property type="match status" value="1"/>
</dbReference>
<dbReference type="PROSITE" id="PS00050">
    <property type="entry name" value="RIBOSOMAL_L23"/>
    <property type="match status" value="1"/>
</dbReference>
<gene>
    <name evidence="1" type="primary">rplW</name>
    <name type="ordered locus">Tpet_1294</name>
</gene>
<sequence length="100" mass="11715">MKQEKLSLNDVLIRPIITEKALILREQRKYVFEVNPLANKNLVKEAVEKLFNVKVEKVNILNMKPKPKRRGIFEGKTRSWKKAVVTLKEGYTIKELEGEH</sequence>
<keyword id="KW-0687">Ribonucleoprotein</keyword>
<keyword id="KW-0689">Ribosomal protein</keyword>
<keyword id="KW-0694">RNA-binding</keyword>
<keyword id="KW-0699">rRNA-binding</keyword>
<accession>A5IM85</accession>
<feature type="chain" id="PRO_1000068181" description="Large ribosomal subunit protein uL23">
    <location>
        <begin position="1"/>
        <end position="100"/>
    </location>
</feature>
<comment type="function">
    <text evidence="1">One of the early assembly proteins it binds 23S rRNA. One of the proteins that surrounds the polypeptide exit tunnel on the outside of the ribosome. Forms the main docking site for trigger factor binding to the ribosome.</text>
</comment>
<comment type="subunit">
    <text evidence="1">Part of the 50S ribosomal subunit. Contacts protein L29, and trigger factor when it is bound to the ribosome.</text>
</comment>
<comment type="similarity">
    <text evidence="1">Belongs to the universal ribosomal protein uL23 family.</text>
</comment>
<name>RL23_THEP1</name>
<evidence type="ECO:0000255" key="1">
    <source>
        <dbReference type="HAMAP-Rule" id="MF_01369"/>
    </source>
</evidence>
<evidence type="ECO:0000305" key="2"/>
<reference key="1">
    <citation type="submission" date="2007-05" db="EMBL/GenBank/DDBJ databases">
        <title>Complete sequence of Thermotoga petrophila RKU-1.</title>
        <authorList>
            <consortium name="US DOE Joint Genome Institute"/>
            <person name="Copeland A."/>
            <person name="Lucas S."/>
            <person name="Lapidus A."/>
            <person name="Barry K."/>
            <person name="Glavina del Rio T."/>
            <person name="Dalin E."/>
            <person name="Tice H."/>
            <person name="Pitluck S."/>
            <person name="Sims D."/>
            <person name="Brettin T."/>
            <person name="Bruce D."/>
            <person name="Detter J.C."/>
            <person name="Han C."/>
            <person name="Tapia R."/>
            <person name="Schmutz J."/>
            <person name="Larimer F."/>
            <person name="Land M."/>
            <person name="Hauser L."/>
            <person name="Kyrpides N."/>
            <person name="Mikhailova N."/>
            <person name="Nelson K."/>
            <person name="Gogarten J.P."/>
            <person name="Noll K."/>
            <person name="Richardson P."/>
        </authorList>
    </citation>
    <scope>NUCLEOTIDE SEQUENCE [LARGE SCALE GENOMIC DNA]</scope>
    <source>
        <strain>ATCC BAA-488 / DSM 13995 / JCM 10881 / RKU-1</strain>
    </source>
</reference>
<organism>
    <name type="scientific">Thermotoga petrophila (strain ATCC BAA-488 / DSM 13995 / JCM 10881 / RKU-1)</name>
    <dbReference type="NCBI Taxonomy" id="390874"/>
    <lineage>
        <taxon>Bacteria</taxon>
        <taxon>Thermotogati</taxon>
        <taxon>Thermotogota</taxon>
        <taxon>Thermotogae</taxon>
        <taxon>Thermotogales</taxon>
        <taxon>Thermotogaceae</taxon>
        <taxon>Thermotoga</taxon>
    </lineage>
</organism>
<proteinExistence type="inferred from homology"/>